<name>SAR1A_MOUSE</name>
<accession>P36536</accession>
<organism>
    <name type="scientific">Mus musculus</name>
    <name type="common">Mouse</name>
    <dbReference type="NCBI Taxonomy" id="10090"/>
    <lineage>
        <taxon>Eukaryota</taxon>
        <taxon>Metazoa</taxon>
        <taxon>Chordata</taxon>
        <taxon>Craniata</taxon>
        <taxon>Vertebrata</taxon>
        <taxon>Euteleostomi</taxon>
        <taxon>Mammalia</taxon>
        <taxon>Eutheria</taxon>
        <taxon>Euarchontoglires</taxon>
        <taxon>Glires</taxon>
        <taxon>Rodentia</taxon>
        <taxon>Myomorpha</taxon>
        <taxon>Muroidea</taxon>
        <taxon>Muridae</taxon>
        <taxon>Murinae</taxon>
        <taxon>Mus</taxon>
        <taxon>Mus</taxon>
    </lineage>
</organism>
<feature type="chain" id="PRO_0000206259" description="Small COPII coat GTPase SAR1A">
    <location>
        <begin position="1"/>
        <end position="198"/>
    </location>
</feature>
<feature type="region of interest" description="Mediates recruitment to ER membranes" evidence="2">
    <location>
        <begin position="15"/>
        <end position="19"/>
    </location>
</feature>
<feature type="short sequence motif" description="STAR; SAR1-N-terminal activation recruitment. Required for the activation by PREB and subsequent recruitment to ER membrane" evidence="2">
    <location>
        <begin position="3"/>
        <end position="5"/>
    </location>
</feature>
<feature type="binding site" evidence="1">
    <location>
        <position position="34"/>
    </location>
    <ligand>
        <name>Mg(2+)</name>
        <dbReference type="ChEBI" id="CHEBI:18420"/>
    </ligand>
</feature>
<feature type="binding site" evidence="1">
    <location>
        <position position="35"/>
    </location>
    <ligand>
        <name>GDP</name>
        <dbReference type="ChEBI" id="CHEBI:58189"/>
    </ligand>
</feature>
<feature type="binding site" evidence="3">
    <location>
        <position position="35"/>
    </location>
    <ligand>
        <name>GTP</name>
        <dbReference type="ChEBI" id="CHEBI:37565"/>
    </ligand>
</feature>
<feature type="binding site" evidence="1">
    <location>
        <position position="36"/>
    </location>
    <ligand>
        <name>GDP</name>
        <dbReference type="ChEBI" id="CHEBI:58189"/>
    </ligand>
</feature>
<feature type="binding site" evidence="1">
    <location>
        <position position="37"/>
    </location>
    <ligand>
        <name>GDP</name>
        <dbReference type="ChEBI" id="CHEBI:58189"/>
    </ligand>
</feature>
<feature type="binding site" evidence="3">
    <location>
        <position position="37"/>
    </location>
    <ligand>
        <name>GTP</name>
        <dbReference type="ChEBI" id="CHEBI:37565"/>
    </ligand>
</feature>
<feature type="binding site" evidence="1">
    <location>
        <position position="38"/>
    </location>
    <ligand>
        <name>GDP</name>
        <dbReference type="ChEBI" id="CHEBI:58189"/>
    </ligand>
</feature>
<feature type="binding site" evidence="3">
    <location>
        <position position="38"/>
    </location>
    <ligand>
        <name>GTP</name>
        <dbReference type="ChEBI" id="CHEBI:37565"/>
    </ligand>
</feature>
<feature type="binding site" evidence="1">
    <location>
        <position position="39"/>
    </location>
    <ligand>
        <name>GDP</name>
        <dbReference type="ChEBI" id="CHEBI:58189"/>
    </ligand>
</feature>
<feature type="binding site" evidence="3">
    <location>
        <position position="39"/>
    </location>
    <ligand>
        <name>GTP</name>
        <dbReference type="ChEBI" id="CHEBI:37565"/>
    </ligand>
</feature>
<feature type="binding site" evidence="1">
    <location>
        <position position="40"/>
    </location>
    <ligand>
        <name>GDP</name>
        <dbReference type="ChEBI" id="CHEBI:58189"/>
    </ligand>
</feature>
<feature type="binding site" evidence="3">
    <location>
        <position position="40"/>
    </location>
    <ligand>
        <name>GTP</name>
        <dbReference type="ChEBI" id="CHEBI:37565"/>
    </ligand>
</feature>
<feature type="binding site" evidence="1">
    <location>
        <position position="75"/>
    </location>
    <ligand>
        <name>Mg(2+)</name>
        <dbReference type="ChEBI" id="CHEBI:18420"/>
    </ligand>
</feature>
<feature type="binding site" evidence="1">
    <location>
        <position position="134"/>
    </location>
    <ligand>
        <name>GDP</name>
        <dbReference type="ChEBI" id="CHEBI:58189"/>
    </ligand>
</feature>
<feature type="binding site" evidence="3">
    <location>
        <position position="134"/>
    </location>
    <ligand>
        <name>GTP</name>
        <dbReference type="ChEBI" id="CHEBI:37565"/>
    </ligand>
</feature>
<feature type="binding site" evidence="1">
    <location>
        <position position="135"/>
    </location>
    <ligand>
        <name>GDP</name>
        <dbReference type="ChEBI" id="CHEBI:58189"/>
    </ligand>
</feature>
<feature type="binding site" evidence="3">
    <location>
        <position position="135"/>
    </location>
    <ligand>
        <name>GTP</name>
        <dbReference type="ChEBI" id="CHEBI:37565"/>
    </ligand>
</feature>
<feature type="binding site" evidence="1">
    <location>
        <position position="137"/>
    </location>
    <ligand>
        <name>GDP</name>
        <dbReference type="ChEBI" id="CHEBI:58189"/>
    </ligand>
</feature>
<feature type="binding site" evidence="3">
    <location>
        <position position="137"/>
    </location>
    <ligand>
        <name>GTP</name>
        <dbReference type="ChEBI" id="CHEBI:37565"/>
    </ligand>
</feature>
<feature type="binding site" evidence="1">
    <location>
        <position position="180"/>
    </location>
    <ligand>
        <name>GDP</name>
        <dbReference type="ChEBI" id="CHEBI:58189"/>
    </ligand>
</feature>
<feature type="binding site" evidence="3">
    <location>
        <position position="180"/>
    </location>
    <ligand>
        <name>GTP</name>
        <dbReference type="ChEBI" id="CHEBI:37565"/>
    </ligand>
</feature>
<feature type="binding site" evidence="1">
    <location>
        <position position="181"/>
    </location>
    <ligand>
        <name>GDP</name>
        <dbReference type="ChEBI" id="CHEBI:58189"/>
    </ligand>
</feature>
<feature type="binding site" evidence="3">
    <location>
        <position position="181"/>
    </location>
    <ligand>
        <name>GTP</name>
        <dbReference type="ChEBI" id="CHEBI:37565"/>
    </ligand>
</feature>
<feature type="modified residue" description="Phosphothreonine" evidence="7">
    <location>
        <position position="139"/>
    </location>
</feature>
<gene>
    <name evidence="6" type="primary">Sar1a</name>
    <name type="synonym">Sara</name>
    <name type="synonym">Sara1</name>
</gene>
<protein>
    <recommendedName>
        <fullName evidence="1">Small COPII coat GTPase SAR1A</fullName>
        <ecNumber evidence="1">3.6.5.2</ecNumber>
    </recommendedName>
</protein>
<keyword id="KW-0963">Cytoplasm</keyword>
<keyword id="KW-0256">Endoplasmic reticulum</keyword>
<keyword id="KW-0931">ER-Golgi transport</keyword>
<keyword id="KW-0333">Golgi apparatus</keyword>
<keyword id="KW-0342">GTP-binding</keyword>
<keyword id="KW-0378">Hydrolase</keyword>
<keyword id="KW-0458">Lysosome</keyword>
<keyword id="KW-0460">Magnesium</keyword>
<keyword id="KW-0472">Membrane</keyword>
<keyword id="KW-0479">Metal-binding</keyword>
<keyword id="KW-0547">Nucleotide-binding</keyword>
<keyword id="KW-0597">Phosphoprotein</keyword>
<keyword id="KW-0653">Protein transport</keyword>
<keyword id="KW-1185">Reference proteome</keyword>
<keyword id="KW-0813">Transport</keyword>
<evidence type="ECO:0000250" key="1">
    <source>
        <dbReference type="UniProtKB" id="Q9NR31"/>
    </source>
</evidence>
<evidence type="ECO:0000250" key="2">
    <source>
        <dbReference type="UniProtKB" id="Q9QVY3"/>
    </source>
</evidence>
<evidence type="ECO:0000250" key="3">
    <source>
        <dbReference type="UniProtKB" id="Q9Y6B6"/>
    </source>
</evidence>
<evidence type="ECO:0000269" key="4">
    <source>
    </source>
</evidence>
<evidence type="ECO:0000305" key="5"/>
<evidence type="ECO:0000312" key="6">
    <source>
        <dbReference type="MGI" id="MGI:98230"/>
    </source>
</evidence>
<evidence type="ECO:0007744" key="7">
    <source>
    </source>
</evidence>
<reference key="1">
    <citation type="journal article" date="1993" name="FEBS Lett.">
        <title>Molecular analysis of SAR1-related cDNAs from a mouse pituitary cell line.</title>
        <authorList>
            <person name="Shen K.A."/>
            <person name="Hammond C.M."/>
            <person name="Moore H.P."/>
        </authorList>
    </citation>
    <scope>NUCLEOTIDE SEQUENCE [MRNA]</scope>
    <scope>TISSUE SPECIFICITY</scope>
    <source>
        <strain>LAF1</strain>
    </source>
</reference>
<reference key="2">
    <citation type="journal article" date="2010" name="Cell">
        <title>A tissue-specific atlas of mouse protein phosphorylation and expression.</title>
        <authorList>
            <person name="Huttlin E.L."/>
            <person name="Jedrychowski M.P."/>
            <person name="Elias J.E."/>
            <person name="Goswami T."/>
            <person name="Rad R."/>
            <person name="Beausoleil S.A."/>
            <person name="Villen J."/>
            <person name="Haas W."/>
            <person name="Sowa M.E."/>
            <person name="Gygi S.P."/>
        </authorList>
    </citation>
    <scope>PHOSPHORYLATION [LARGE SCALE ANALYSIS] AT THR-139</scope>
    <scope>IDENTIFICATION BY MASS SPECTROMETRY [LARGE SCALE ANALYSIS]</scope>
    <source>
        <tissue>Brain</tissue>
        <tissue>Brown adipose tissue</tissue>
        <tissue>Heart</tissue>
        <tissue>Kidney</tissue>
        <tissue>Liver</tissue>
        <tissue>Lung</tissue>
        <tissue>Pancreas</tissue>
        <tissue>Spleen</tissue>
        <tissue>Testis</tissue>
    </source>
</reference>
<sequence>MSFIFEWIYNGFSSVLQFLGLYKKSGKLVFLGLDNAGKTTLLQMLKDDRLGQHVPTLHPTSEELTIAGMTFTTFDLGGHEQARRVWKNYLPAINGIVFLVDCADHSRLMESKVELNALMTDETISNVPILILGNKIDRTDAISEEKLREIKGLYGQTTGKGNVTLKELNARPMEVFMCSVLKRQGYGEGFRWLSQYID</sequence>
<proteinExistence type="evidence at protein level"/>
<dbReference type="EC" id="3.6.5.2" evidence="1"/>
<dbReference type="EMBL" id="L20294">
    <property type="protein sequence ID" value="AAA16323.1"/>
    <property type="molecule type" value="mRNA"/>
</dbReference>
<dbReference type="SMR" id="P36536"/>
<dbReference type="FunCoup" id="P36536">
    <property type="interactions" value="2501"/>
</dbReference>
<dbReference type="STRING" id="10090.ENSMUSP00000020285"/>
<dbReference type="GlyGen" id="P36536">
    <property type="glycosylation" value="1 site, 1 O-linked glycan (1 site)"/>
</dbReference>
<dbReference type="iPTMnet" id="P36536"/>
<dbReference type="PhosphoSitePlus" id="P36536"/>
<dbReference type="SwissPalm" id="P36536"/>
<dbReference type="jPOST" id="P36536"/>
<dbReference type="PaxDb" id="10090-ENSMUSP00000020285"/>
<dbReference type="PeptideAtlas" id="P36536"/>
<dbReference type="ProteomicsDB" id="256703"/>
<dbReference type="Pumba" id="P36536"/>
<dbReference type="AGR" id="MGI:98230"/>
<dbReference type="MGI" id="MGI:98230">
    <property type="gene designation" value="Sar1a"/>
</dbReference>
<dbReference type="eggNOG" id="KOG0077">
    <property type="taxonomic scope" value="Eukaryota"/>
</dbReference>
<dbReference type="InParanoid" id="P36536"/>
<dbReference type="PhylomeDB" id="P36536"/>
<dbReference type="ChiTaRS" id="Sar1a">
    <property type="organism name" value="mouse"/>
</dbReference>
<dbReference type="PRO" id="PR:P36536"/>
<dbReference type="Proteomes" id="UP000000589">
    <property type="component" value="Unplaced"/>
</dbReference>
<dbReference type="RNAct" id="P36536">
    <property type="molecule type" value="protein"/>
</dbReference>
<dbReference type="GO" id="GO:0030127">
    <property type="term" value="C:COPII vesicle coat"/>
    <property type="evidence" value="ECO:0000250"/>
    <property type="project" value="UniProtKB"/>
</dbReference>
<dbReference type="GO" id="GO:0005829">
    <property type="term" value="C:cytosol"/>
    <property type="evidence" value="ECO:0007669"/>
    <property type="project" value="UniProtKB-SubCell"/>
</dbReference>
<dbReference type="GO" id="GO:0005783">
    <property type="term" value="C:endoplasmic reticulum"/>
    <property type="evidence" value="ECO:0000314"/>
    <property type="project" value="MGI"/>
</dbReference>
<dbReference type="GO" id="GO:0070971">
    <property type="term" value="C:endoplasmic reticulum exit site"/>
    <property type="evidence" value="ECO:0000250"/>
    <property type="project" value="UniProtKB"/>
</dbReference>
<dbReference type="GO" id="GO:0005789">
    <property type="term" value="C:endoplasmic reticulum membrane"/>
    <property type="evidence" value="ECO:0007669"/>
    <property type="project" value="UniProtKB-SubCell"/>
</dbReference>
<dbReference type="GO" id="GO:0005794">
    <property type="term" value="C:Golgi apparatus"/>
    <property type="evidence" value="ECO:0000314"/>
    <property type="project" value="MGI"/>
</dbReference>
<dbReference type="GO" id="GO:0032580">
    <property type="term" value="C:Golgi cisterna membrane"/>
    <property type="evidence" value="ECO:0007669"/>
    <property type="project" value="UniProtKB-SubCell"/>
</dbReference>
<dbReference type="GO" id="GO:0005765">
    <property type="term" value="C:lysosomal membrane"/>
    <property type="evidence" value="ECO:0007669"/>
    <property type="project" value="UniProtKB-SubCell"/>
</dbReference>
<dbReference type="GO" id="GO:0016529">
    <property type="term" value="C:sarcoplasmic reticulum"/>
    <property type="evidence" value="ECO:0000314"/>
    <property type="project" value="MGI"/>
</dbReference>
<dbReference type="GO" id="GO:0003925">
    <property type="term" value="F:G protein activity"/>
    <property type="evidence" value="ECO:0000250"/>
    <property type="project" value="UniProtKB"/>
</dbReference>
<dbReference type="GO" id="GO:0005525">
    <property type="term" value="F:GTP binding"/>
    <property type="evidence" value="ECO:0007669"/>
    <property type="project" value="UniProtKB-KW"/>
</dbReference>
<dbReference type="GO" id="GO:0046872">
    <property type="term" value="F:metal ion binding"/>
    <property type="evidence" value="ECO:0007669"/>
    <property type="project" value="UniProtKB-KW"/>
</dbReference>
<dbReference type="GO" id="GO:0048208">
    <property type="term" value="P:COPII vesicle coating"/>
    <property type="evidence" value="ECO:0000250"/>
    <property type="project" value="UniProtKB"/>
</dbReference>
<dbReference type="GO" id="GO:0090110">
    <property type="term" value="P:COPII-coated vesicle cargo loading"/>
    <property type="evidence" value="ECO:0000250"/>
    <property type="project" value="UniProtKB"/>
</dbReference>
<dbReference type="GO" id="GO:0006888">
    <property type="term" value="P:endoplasmic reticulum to Golgi vesicle-mediated transport"/>
    <property type="evidence" value="ECO:0000250"/>
    <property type="project" value="UniProtKB"/>
</dbReference>
<dbReference type="GO" id="GO:0006886">
    <property type="term" value="P:intracellular protein transport"/>
    <property type="evidence" value="ECO:0007669"/>
    <property type="project" value="InterPro"/>
</dbReference>
<dbReference type="GO" id="GO:1901303">
    <property type="term" value="P:negative regulation of cargo loading into COPII-coated vesicle"/>
    <property type="evidence" value="ECO:0000314"/>
    <property type="project" value="MGI"/>
</dbReference>
<dbReference type="GO" id="GO:1901301">
    <property type="term" value="P:regulation of cargo loading into COPII-coated vesicle"/>
    <property type="evidence" value="ECO:0000315"/>
    <property type="project" value="MGI"/>
</dbReference>
<dbReference type="GO" id="GO:0016192">
    <property type="term" value="P:vesicle-mediated transport"/>
    <property type="evidence" value="ECO:0000314"/>
    <property type="project" value="MGI"/>
</dbReference>
<dbReference type="CDD" id="cd00879">
    <property type="entry name" value="Sar1"/>
    <property type="match status" value="1"/>
</dbReference>
<dbReference type="FunFam" id="3.40.50.300:FF:000161">
    <property type="entry name" value="Small COPII coat GTPase"/>
    <property type="match status" value="1"/>
</dbReference>
<dbReference type="Gene3D" id="3.40.50.300">
    <property type="entry name" value="P-loop containing nucleotide triphosphate hydrolases"/>
    <property type="match status" value="1"/>
</dbReference>
<dbReference type="InterPro" id="IPR027417">
    <property type="entry name" value="P-loop_NTPase"/>
</dbReference>
<dbReference type="InterPro" id="IPR005225">
    <property type="entry name" value="Small_GTP-bd"/>
</dbReference>
<dbReference type="InterPro" id="IPR006689">
    <property type="entry name" value="Small_GTPase_ARF/SAR"/>
</dbReference>
<dbReference type="InterPro" id="IPR006687">
    <property type="entry name" value="Small_GTPase_SAR1"/>
</dbReference>
<dbReference type="NCBIfam" id="TIGR00231">
    <property type="entry name" value="small_GTP"/>
    <property type="match status" value="1"/>
</dbReference>
<dbReference type="PANTHER" id="PTHR45684">
    <property type="entry name" value="RE74312P"/>
    <property type="match status" value="1"/>
</dbReference>
<dbReference type="Pfam" id="PF00025">
    <property type="entry name" value="Arf"/>
    <property type="match status" value="1"/>
</dbReference>
<dbReference type="PRINTS" id="PR00328">
    <property type="entry name" value="SAR1GTPBP"/>
</dbReference>
<dbReference type="SMART" id="SM00177">
    <property type="entry name" value="ARF"/>
    <property type="match status" value="1"/>
</dbReference>
<dbReference type="SMART" id="SM00178">
    <property type="entry name" value="SAR"/>
    <property type="match status" value="1"/>
</dbReference>
<dbReference type="SUPFAM" id="SSF52540">
    <property type="entry name" value="P-loop containing nucleoside triphosphate hydrolases"/>
    <property type="match status" value="1"/>
</dbReference>
<dbReference type="PROSITE" id="PS51422">
    <property type="entry name" value="SAR1"/>
    <property type="match status" value="1"/>
</dbReference>
<comment type="function">
    <text evidence="1">Small GTPase that cycles between an active GTP-bound and an inactive GDP-bound state and mainly functions in vesicle-mediated endoplasmic reticulum (ER) to Golgi transport. The active GTP-bound form inserts into the endoplasmic reticulum membrane where it recruits the remainder of the coat protein complex II/COPII. The coat protein complex II assembling and polymerizing on endoplasmic reticulum membrane is responsible for both the sorting of cargos and the deformation and budding of membranes into vesicles destined to the Golgi. The GTPase activity of SAR1 by controlling the timing of COPII budding regulates the size of the formed vesicles and is important for cargo selection depending on their size. Together with SEC16A, forms the organized scaffold defining endoplasmic reticulum exit sites (ERES), some specific domains of the endoplasmic reticulum where COPII vesicles form. In addition to its role in vesicle trafficking, can also function as a leucine sensor regulating TORC1 signaling and more indirectly cellular metabolism, growth and survival. In absence of leucine, interacts with the GATOR2 complex via MIOS and inhibits TORC1 signaling. The binding of leucine abrogates the interaction with GATOR2 and the inhibition of the TORC1 signaling. This function is completely independent of the GTPase activity of SAR1B.</text>
</comment>
<comment type="catalytic activity">
    <reaction evidence="1">
        <text>GTP + H2O = GDP + phosphate + H(+)</text>
        <dbReference type="Rhea" id="RHEA:19669"/>
        <dbReference type="ChEBI" id="CHEBI:15377"/>
        <dbReference type="ChEBI" id="CHEBI:15378"/>
        <dbReference type="ChEBI" id="CHEBI:37565"/>
        <dbReference type="ChEBI" id="CHEBI:43474"/>
        <dbReference type="ChEBI" id="CHEBI:58189"/>
        <dbReference type="EC" id="3.6.5.2"/>
    </reaction>
    <physiologicalReaction direction="left-to-right" evidence="1">
        <dbReference type="Rhea" id="RHEA:19670"/>
    </physiologicalReaction>
</comment>
<comment type="activity regulation">
    <text evidence="1">Small GTPases activation is mediated by guanine exchange factors (GEF), while inactivation through hydrolysis of the bound GTP is stimulated by GTPase activating proteins (GAP). Activated by the guanine nucleotide exchange factor PREB/SEC12 that facilitates the loading of SAR1B with GTP.</text>
</comment>
<comment type="subunit">
    <text evidence="1">Homodimer; upon association with membrane. Part of the coat protein complex II/COPII, composed of SEC23/24 and SEC13/31 heterodimers, that it helps recruit and assemble on endoplasmic reticulum (ER) membranes at ER exit sites. Interacts with PREB; PREB acts as a guanine nucleotide exchange factor facilitating the activation of SAR1B by loading it with GTP. Interacts with B3GAT1. Interacts with MIOS; the interaction is direct, disrupted by the binding of leucine and mediates the interaction of SAR1A with the GATOR2 complex to negatively regulate the TORC1 signaling upon leucine deprivation.</text>
</comment>
<comment type="subcellular location">
    <subcellularLocation>
        <location evidence="1">Endoplasmic reticulum membrane</location>
        <topology evidence="1">Peripheral membrane protein</topology>
    </subcellularLocation>
    <subcellularLocation>
        <location evidence="1">Golgi apparatus</location>
        <location evidence="1">Golgi stack membrane</location>
        <topology evidence="1">Peripheral membrane protein</topology>
    </subcellularLocation>
    <subcellularLocation>
        <location evidence="1">Cytoplasm</location>
        <location evidence="1">Cytosol</location>
    </subcellularLocation>
    <subcellularLocation>
        <location evidence="1">Lysosome membrane</location>
    </subcellularLocation>
    <text evidence="1">Active at endoplasmic reticulum exit sites (ERES) where it inserts into the membrane and recruits the remainder of the coat protein complex II/COPII. Upon leucine deprivation, associates with lysosomal membranes to repress TORC1 signaling.</text>
</comment>
<comment type="tissue specificity">
    <text evidence="4">Expressed in most tissues including liver, heart, brain, skeletal muscle and kidney.</text>
</comment>
<comment type="similarity">
    <text evidence="5">Belongs to the small GTPase superfamily. SAR1 family.</text>
</comment>